<evidence type="ECO:0000255" key="1">
    <source>
        <dbReference type="HAMAP-Rule" id="MF_00918"/>
    </source>
</evidence>
<sequence length="238" mass="26320">MGRKWNNIKEKKAQKDKNTSRIYAKFGKEIYVAAKSGEPNPESNQALRLVLERAKTYSVPNHIIEKAIDKAKGAGDENFDHLRYEGFGPSGSMLIVDALTNNVNRTASDVRAAFGKNGGNMGVSGSVAYMFDHVATFGIEGKSVDEILETLMEQDVDVNDVIDDNGLTIVYAEPDQFAVVQDALRAAGVEEFKVAEFEMLPQTDIELSEADQVTFEKLIDALEDLEDVQNVFHNVDLK</sequence>
<name>Y618_STAAB</name>
<protein>
    <recommendedName>
        <fullName evidence="1">Probable transcriptional regulatory protein SAB0618</fullName>
    </recommendedName>
</protein>
<proteinExistence type="inferred from homology"/>
<organism>
    <name type="scientific">Staphylococcus aureus (strain bovine RF122 / ET3-1)</name>
    <dbReference type="NCBI Taxonomy" id="273036"/>
    <lineage>
        <taxon>Bacteria</taxon>
        <taxon>Bacillati</taxon>
        <taxon>Bacillota</taxon>
        <taxon>Bacilli</taxon>
        <taxon>Bacillales</taxon>
        <taxon>Staphylococcaceae</taxon>
        <taxon>Staphylococcus</taxon>
    </lineage>
</organism>
<comment type="subcellular location">
    <subcellularLocation>
        <location evidence="1">Cytoplasm</location>
    </subcellularLocation>
</comment>
<comment type="similarity">
    <text evidence="1">Belongs to the TACO1 family. YeeN subfamily.</text>
</comment>
<dbReference type="EMBL" id="AJ938182">
    <property type="protein sequence ID" value="CAI80306.1"/>
    <property type="molecule type" value="Genomic_DNA"/>
</dbReference>
<dbReference type="RefSeq" id="WP_000532966.1">
    <property type="nucleotide sequence ID" value="NC_007622.1"/>
</dbReference>
<dbReference type="SMR" id="Q2YSR2"/>
<dbReference type="KEGG" id="sab:SAB0618"/>
<dbReference type="HOGENOM" id="CLU_062974_2_0_9"/>
<dbReference type="GO" id="GO:0005829">
    <property type="term" value="C:cytosol"/>
    <property type="evidence" value="ECO:0007669"/>
    <property type="project" value="TreeGrafter"/>
</dbReference>
<dbReference type="GO" id="GO:0003677">
    <property type="term" value="F:DNA binding"/>
    <property type="evidence" value="ECO:0007669"/>
    <property type="project" value="UniProtKB-UniRule"/>
</dbReference>
<dbReference type="GO" id="GO:0006355">
    <property type="term" value="P:regulation of DNA-templated transcription"/>
    <property type="evidence" value="ECO:0007669"/>
    <property type="project" value="UniProtKB-UniRule"/>
</dbReference>
<dbReference type="FunFam" id="1.10.10.200:FF:000003">
    <property type="entry name" value="Probable transcriptional regulatory protein YeeN"/>
    <property type="match status" value="1"/>
</dbReference>
<dbReference type="Gene3D" id="1.10.10.200">
    <property type="match status" value="1"/>
</dbReference>
<dbReference type="Gene3D" id="3.30.70.980">
    <property type="match status" value="2"/>
</dbReference>
<dbReference type="HAMAP" id="MF_00693">
    <property type="entry name" value="Transcrip_reg_TACO1"/>
    <property type="match status" value="1"/>
</dbReference>
<dbReference type="HAMAP" id="MF_00918">
    <property type="entry name" value="Transcrip_reg_TACO1_YeeN"/>
    <property type="match status" value="1"/>
</dbReference>
<dbReference type="InterPro" id="IPR017856">
    <property type="entry name" value="Integrase-like_N"/>
</dbReference>
<dbReference type="InterPro" id="IPR048300">
    <property type="entry name" value="TACO1_YebC-like_2nd/3rd_dom"/>
</dbReference>
<dbReference type="InterPro" id="IPR049083">
    <property type="entry name" value="TACO1_YebC_N"/>
</dbReference>
<dbReference type="InterPro" id="IPR002876">
    <property type="entry name" value="Transcrip_reg_TACO1-like"/>
</dbReference>
<dbReference type="InterPro" id="IPR026564">
    <property type="entry name" value="Transcrip_reg_TACO1-like_dom3"/>
</dbReference>
<dbReference type="InterPro" id="IPR026562">
    <property type="entry name" value="Transcrip_reg_TACO1_YeeN"/>
</dbReference>
<dbReference type="InterPro" id="IPR029072">
    <property type="entry name" value="YebC-like"/>
</dbReference>
<dbReference type="NCBIfam" id="NF001030">
    <property type="entry name" value="PRK00110.1"/>
    <property type="match status" value="1"/>
</dbReference>
<dbReference type="NCBIfam" id="NF009044">
    <property type="entry name" value="PRK12378.1"/>
    <property type="match status" value="1"/>
</dbReference>
<dbReference type="NCBIfam" id="TIGR01033">
    <property type="entry name" value="YebC/PmpR family DNA-binding transcriptional regulator"/>
    <property type="match status" value="1"/>
</dbReference>
<dbReference type="PANTHER" id="PTHR12532">
    <property type="entry name" value="TRANSLATIONAL ACTIVATOR OF CYTOCHROME C OXIDASE 1"/>
    <property type="match status" value="1"/>
</dbReference>
<dbReference type="PANTHER" id="PTHR12532:SF0">
    <property type="entry name" value="TRANSLATIONAL ACTIVATOR OF CYTOCHROME C OXIDASE 1"/>
    <property type="match status" value="1"/>
</dbReference>
<dbReference type="Pfam" id="PF20772">
    <property type="entry name" value="TACO1_YebC_N"/>
    <property type="match status" value="1"/>
</dbReference>
<dbReference type="Pfam" id="PF01709">
    <property type="entry name" value="Transcrip_reg"/>
    <property type="match status" value="1"/>
</dbReference>
<dbReference type="SUPFAM" id="SSF75625">
    <property type="entry name" value="YebC-like"/>
    <property type="match status" value="1"/>
</dbReference>
<reference key="1">
    <citation type="journal article" date="2007" name="PLoS ONE">
        <title>Molecular correlates of host specialization in Staphylococcus aureus.</title>
        <authorList>
            <person name="Herron-Olson L."/>
            <person name="Fitzgerald J.R."/>
            <person name="Musser J.M."/>
            <person name="Kapur V."/>
        </authorList>
    </citation>
    <scope>NUCLEOTIDE SEQUENCE [LARGE SCALE GENOMIC DNA]</scope>
    <source>
        <strain>bovine RF122 / ET3-1</strain>
    </source>
</reference>
<accession>Q2YSR2</accession>
<gene>
    <name type="ordered locus">SAB0618</name>
</gene>
<keyword id="KW-0963">Cytoplasm</keyword>
<keyword id="KW-0238">DNA-binding</keyword>
<keyword id="KW-0804">Transcription</keyword>
<keyword id="KW-0805">Transcription regulation</keyword>
<feature type="chain" id="PRO_0000257136" description="Probable transcriptional regulatory protein SAB0618">
    <location>
        <begin position="1"/>
        <end position="238"/>
    </location>
</feature>